<organism>
    <name type="scientific">Rhizobium leguminosarum bv. viciae</name>
    <dbReference type="NCBI Taxonomy" id="387"/>
    <lineage>
        <taxon>Bacteria</taxon>
        <taxon>Pseudomonadati</taxon>
        <taxon>Pseudomonadota</taxon>
        <taxon>Alphaproteobacteria</taxon>
        <taxon>Hyphomicrobiales</taxon>
        <taxon>Rhizobiaceae</taxon>
        <taxon>Rhizobium/Agrobacterium group</taxon>
        <taxon>Rhizobium</taxon>
    </lineage>
</organism>
<evidence type="ECO:0000250" key="1"/>
<evidence type="ECO:0000255" key="2">
    <source>
        <dbReference type="PROSITE-ProRule" id="PRU00241"/>
    </source>
</evidence>
<evidence type="ECO:0000305" key="3"/>
<accession>P28151</accession>
<dbReference type="EMBL" id="X52974">
    <property type="protein sequence ID" value="CAA37156.1"/>
    <property type="molecule type" value="Genomic_DNA"/>
</dbReference>
<dbReference type="EMBL" id="Z36981">
    <property type="protein sequence ID" value="CAA85438.1"/>
    <property type="molecule type" value="Genomic_DNA"/>
</dbReference>
<dbReference type="PIR" id="S27340">
    <property type="entry name" value="S27340"/>
</dbReference>
<dbReference type="RefSeq" id="WP_018517053.1">
    <property type="nucleotide sequence ID" value="NZ_WIEJ01000010.1"/>
</dbReference>
<dbReference type="SMR" id="P28151"/>
<dbReference type="GO" id="GO:0009055">
    <property type="term" value="F:electron transfer activity"/>
    <property type="evidence" value="ECO:0007669"/>
    <property type="project" value="TreeGrafter"/>
</dbReference>
<dbReference type="GO" id="GO:0005506">
    <property type="term" value="F:iron ion binding"/>
    <property type="evidence" value="ECO:0007669"/>
    <property type="project" value="InterPro"/>
</dbReference>
<dbReference type="GO" id="GO:0043448">
    <property type="term" value="P:alkane catabolic process"/>
    <property type="evidence" value="ECO:0007669"/>
    <property type="project" value="TreeGrafter"/>
</dbReference>
<dbReference type="CDD" id="cd00730">
    <property type="entry name" value="rubredoxin"/>
    <property type="match status" value="1"/>
</dbReference>
<dbReference type="Gene3D" id="2.20.28.10">
    <property type="match status" value="1"/>
</dbReference>
<dbReference type="InterPro" id="IPR024934">
    <property type="entry name" value="Rubredoxin-like_dom"/>
</dbReference>
<dbReference type="InterPro" id="IPR024935">
    <property type="entry name" value="Rubredoxin_dom"/>
</dbReference>
<dbReference type="InterPro" id="IPR050526">
    <property type="entry name" value="Rubredoxin_ET"/>
</dbReference>
<dbReference type="InterPro" id="IPR018527">
    <property type="entry name" value="Rubredoxin_Fe_BS"/>
</dbReference>
<dbReference type="PANTHER" id="PTHR47627">
    <property type="entry name" value="RUBREDOXIN"/>
    <property type="match status" value="1"/>
</dbReference>
<dbReference type="PANTHER" id="PTHR47627:SF1">
    <property type="entry name" value="RUBREDOXIN-1-RELATED"/>
    <property type="match status" value="1"/>
</dbReference>
<dbReference type="Pfam" id="PF00301">
    <property type="entry name" value="Rubredoxin"/>
    <property type="match status" value="1"/>
</dbReference>
<dbReference type="PRINTS" id="PR00163">
    <property type="entry name" value="RUBREDOXIN"/>
</dbReference>
<dbReference type="SUPFAM" id="SSF57802">
    <property type="entry name" value="Rubredoxin-like"/>
    <property type="match status" value="1"/>
</dbReference>
<dbReference type="PROSITE" id="PS00202">
    <property type="entry name" value="RUBREDOXIN"/>
    <property type="match status" value="1"/>
</dbReference>
<dbReference type="PROSITE" id="PS50903">
    <property type="entry name" value="RUBREDOXIN_LIKE"/>
    <property type="match status" value="1"/>
</dbReference>
<comment type="function">
    <text>Could be an electron transport intermediate in hydrogen oxidation.</text>
</comment>
<comment type="cofactor">
    <cofactor evidence="1">
        <name>Fe(3+)</name>
        <dbReference type="ChEBI" id="CHEBI:29034"/>
    </cofactor>
    <text evidence="1">Binds 1 Fe(3+) ion per subunit.</text>
</comment>
<comment type="similarity">
    <text evidence="3">Belongs to the rubredoxin family.</text>
</comment>
<protein>
    <recommendedName>
        <fullName>Probable rubredoxin HupI</fullName>
    </recommendedName>
</protein>
<sequence length="70" mass="8012">MSAFENFGKRETVSDDRMECGICWHVYDPAEGDPVWQIPPGTPFSNLTEDWRCPNCDALQSKFMRLGDGR</sequence>
<name>RUBL_RHILV</name>
<keyword id="KW-0249">Electron transport</keyword>
<keyword id="KW-0408">Iron</keyword>
<keyword id="KW-0479">Metal-binding</keyword>
<keyword id="KW-0813">Transport</keyword>
<proteinExistence type="inferred from homology"/>
<reference key="1">
    <citation type="journal article" date="1992" name="J. Mol. Biol.">
        <title>Nucleotide sequence and organization of an H2-uptake gene cluster from Rhizobium leguminosarum bv. viciae containing a rubredoxin-like gene and four additional open reading frames.</title>
        <authorList>
            <person name="Rey L."/>
            <person name="Hidalgo E."/>
            <person name="Palacios J.M."/>
            <person name="Ruiz-Argueso T."/>
        </authorList>
    </citation>
    <scope>NUCLEOTIDE SEQUENCE [GENOMIC DNA]</scope>
    <source>
        <strain>128c53</strain>
    </source>
</reference>
<reference key="2">
    <citation type="journal article" date="1997" name="Mol. Plant Microbe Interact.">
        <title>Organization of the hup-region and its differential transcription in non-symbiotic and symbiotic cells of Rhizobium leguminosarum bv. viciae B10.</title>
        <authorList>
            <person name="Brito B."/>
            <person name="Palacios J.M."/>
            <person name="Imperial J."/>
            <person name="Ruiz-Argueso T."/>
            <person name="Yang W.C."/>
            <person name="Bisseling T."/>
            <person name="Schmitt H."/>
            <person name="Kerl V."/>
            <person name="Bauer T."/>
            <person name="Kokotek W."/>
            <person name="Lotz W."/>
        </authorList>
    </citation>
    <scope>NUCLEOTIDE SEQUENCE [GENOMIC DNA]</scope>
    <source>
        <strain>B10</strain>
    </source>
</reference>
<gene>
    <name type="primary">hupI</name>
</gene>
<feature type="chain" id="PRO_0000135056" description="Probable rubredoxin HupI">
    <location>
        <begin position="1"/>
        <end position="70"/>
    </location>
</feature>
<feature type="domain" description="Rubredoxin-like" evidence="2">
    <location>
        <begin position="15"/>
        <end position="66"/>
    </location>
</feature>
<feature type="binding site" evidence="2">
    <location>
        <position position="20"/>
    </location>
    <ligand>
        <name>Fe cation</name>
        <dbReference type="ChEBI" id="CHEBI:24875"/>
    </ligand>
</feature>
<feature type="binding site" evidence="2">
    <location>
        <position position="23"/>
    </location>
    <ligand>
        <name>Fe cation</name>
        <dbReference type="ChEBI" id="CHEBI:24875"/>
    </ligand>
</feature>
<feature type="binding site" evidence="2">
    <location>
        <position position="53"/>
    </location>
    <ligand>
        <name>Fe cation</name>
        <dbReference type="ChEBI" id="CHEBI:24875"/>
    </ligand>
</feature>
<feature type="binding site" evidence="2">
    <location>
        <position position="56"/>
    </location>
    <ligand>
        <name>Fe cation</name>
        <dbReference type="ChEBI" id="CHEBI:24875"/>
    </ligand>
</feature>